<keyword id="KW-0997">Cell inner membrane</keyword>
<keyword id="KW-1003">Cell membrane</keyword>
<keyword id="KW-0133">Cell shape</keyword>
<keyword id="KW-0238">DNA-binding</keyword>
<keyword id="KW-0472">Membrane</keyword>
<keyword id="KW-0735">Signal-anchor</keyword>
<keyword id="KW-0812">Transmembrane</keyword>
<keyword id="KW-1133">Transmembrane helix</keyword>
<organism>
    <name type="scientific">Klebsiella pneumoniae subsp. pneumoniae (strain ATCC 700721 / MGH 78578)</name>
    <dbReference type="NCBI Taxonomy" id="272620"/>
    <lineage>
        <taxon>Bacteria</taxon>
        <taxon>Pseudomonadati</taxon>
        <taxon>Pseudomonadota</taxon>
        <taxon>Gammaproteobacteria</taxon>
        <taxon>Enterobacterales</taxon>
        <taxon>Enterobacteriaceae</taxon>
        <taxon>Klebsiella/Raoultella group</taxon>
        <taxon>Klebsiella</taxon>
        <taxon>Klebsiella pneumoniae complex</taxon>
    </lineage>
</organism>
<comment type="function">
    <text evidence="1">Cytoskeletal protein that is involved in cell-shape control through regulation of the length of the long axis.</text>
</comment>
<comment type="subcellular location">
    <subcellularLocation>
        <location evidence="1">Cell inner membrane</location>
        <topology evidence="1">Single-pass type II membrane protein</topology>
    </subcellularLocation>
    <text evidence="1">Forms helical filaments along the long axis of the cell.</text>
</comment>
<comment type="domain">
    <text evidence="1">The helix-turn-helix (HTH) motif in the cytoplasmic domain of the N-terminus is involved in the formation of spirals to maintain the rigid rod shape. As this protein is anchored in the cytoplasmic membrane, the HTH motif may contribute to protein-protein interactions to form the RodZ helix, which is localized beneath the cytoplasmic membrane. The C-terminal domain may be critical for determination of the rod shape by probably interacting with enzymes required for synthesis of the peptidoglycan layer, including PBPs in the periplasm.</text>
</comment>
<comment type="similarity">
    <text evidence="1">Belongs to the RodZ family.</text>
</comment>
<reference key="1">
    <citation type="submission" date="2006-09" db="EMBL/GenBank/DDBJ databases">
        <authorList>
            <consortium name="The Klebsiella pneumonia Genome Sequencing Project"/>
            <person name="McClelland M."/>
            <person name="Sanderson E.K."/>
            <person name="Spieth J."/>
            <person name="Clifton W.S."/>
            <person name="Latreille P."/>
            <person name="Sabo A."/>
            <person name="Pepin K."/>
            <person name="Bhonagiri V."/>
            <person name="Porwollik S."/>
            <person name="Ali J."/>
            <person name="Wilson R.K."/>
        </authorList>
    </citation>
    <scope>NUCLEOTIDE SEQUENCE [LARGE SCALE GENOMIC DNA]</scope>
    <source>
        <strain>ATCC 700721 / MGH 78578</strain>
    </source>
</reference>
<protein>
    <recommendedName>
        <fullName evidence="1">Cytoskeleton protein RodZ</fullName>
    </recommendedName>
</protein>
<proteinExistence type="inferred from homology"/>
<feature type="chain" id="PRO_0000361846" description="Cytoskeleton protein RodZ">
    <location>
        <begin position="1"/>
        <end position="331"/>
    </location>
</feature>
<feature type="topological domain" description="Cytoplasmic" evidence="1">
    <location>
        <begin position="1"/>
        <end position="111"/>
    </location>
</feature>
<feature type="transmembrane region" description="Helical; Signal-anchor for type II membrane protein" evidence="1">
    <location>
        <begin position="112"/>
        <end position="132"/>
    </location>
</feature>
<feature type="topological domain" description="Periplasmic" evidence="1">
    <location>
        <begin position="133"/>
        <end position="331"/>
    </location>
</feature>
<feature type="domain" description="HTH cro/C1-type" evidence="1">
    <location>
        <begin position="19"/>
        <end position="71"/>
    </location>
</feature>
<feature type="DNA-binding region" description="H-T-H motif" evidence="1">
    <location>
        <begin position="30"/>
        <end position="49"/>
    </location>
</feature>
<feature type="region of interest" description="Disordered" evidence="2">
    <location>
        <begin position="146"/>
        <end position="238"/>
    </location>
</feature>
<feature type="compositionally biased region" description="Polar residues" evidence="2">
    <location>
        <begin position="146"/>
        <end position="166"/>
    </location>
</feature>
<feature type="compositionally biased region" description="Low complexity" evidence="2">
    <location>
        <begin position="167"/>
        <end position="202"/>
    </location>
</feature>
<feature type="compositionally biased region" description="Low complexity" evidence="2">
    <location>
        <begin position="216"/>
        <end position="234"/>
    </location>
</feature>
<evidence type="ECO:0000255" key="1">
    <source>
        <dbReference type="HAMAP-Rule" id="MF_02017"/>
    </source>
</evidence>
<evidence type="ECO:0000256" key="2">
    <source>
        <dbReference type="SAM" id="MobiDB-lite"/>
    </source>
</evidence>
<accession>A6TCD5</accession>
<dbReference type="EMBL" id="CP000647">
    <property type="protein sequence ID" value="ABR78256.1"/>
    <property type="molecule type" value="Genomic_DNA"/>
</dbReference>
<dbReference type="RefSeq" id="WP_004149336.1">
    <property type="nucleotide sequence ID" value="NC_009648.1"/>
</dbReference>
<dbReference type="SMR" id="A6TCD5"/>
<dbReference type="STRING" id="272620.KPN_02846"/>
<dbReference type="jPOST" id="A6TCD5"/>
<dbReference type="PaxDb" id="272620-KPN_02846"/>
<dbReference type="EnsemblBacteria" id="ABR78256">
    <property type="protein sequence ID" value="ABR78256"/>
    <property type="gene ID" value="KPN_02846"/>
</dbReference>
<dbReference type="KEGG" id="kpn:KPN_02846"/>
<dbReference type="HOGENOM" id="CLU_047530_3_1_6"/>
<dbReference type="Proteomes" id="UP000000265">
    <property type="component" value="Chromosome"/>
</dbReference>
<dbReference type="GO" id="GO:0005886">
    <property type="term" value="C:plasma membrane"/>
    <property type="evidence" value="ECO:0007669"/>
    <property type="project" value="UniProtKB-SubCell"/>
</dbReference>
<dbReference type="GO" id="GO:0003677">
    <property type="term" value="F:DNA binding"/>
    <property type="evidence" value="ECO:0007669"/>
    <property type="project" value="UniProtKB-KW"/>
</dbReference>
<dbReference type="GO" id="GO:0008360">
    <property type="term" value="P:regulation of cell shape"/>
    <property type="evidence" value="ECO:0007669"/>
    <property type="project" value="UniProtKB-UniRule"/>
</dbReference>
<dbReference type="CDD" id="cd00093">
    <property type="entry name" value="HTH_XRE"/>
    <property type="match status" value="1"/>
</dbReference>
<dbReference type="Gene3D" id="1.10.260.40">
    <property type="entry name" value="lambda repressor-like DNA-binding domains"/>
    <property type="match status" value="1"/>
</dbReference>
<dbReference type="HAMAP" id="MF_02017">
    <property type="entry name" value="RodZ"/>
    <property type="match status" value="1"/>
</dbReference>
<dbReference type="InterPro" id="IPR050400">
    <property type="entry name" value="Bact_Cytoskel_RodZ"/>
</dbReference>
<dbReference type="InterPro" id="IPR001387">
    <property type="entry name" value="Cro/C1-type_HTH"/>
</dbReference>
<dbReference type="InterPro" id="IPR010982">
    <property type="entry name" value="Lambda_DNA-bd_dom_sf"/>
</dbReference>
<dbReference type="InterPro" id="IPR023690">
    <property type="entry name" value="RodZ"/>
</dbReference>
<dbReference type="InterPro" id="IPR025194">
    <property type="entry name" value="RodZ-like_C"/>
</dbReference>
<dbReference type="NCBIfam" id="NF008109">
    <property type="entry name" value="PRK10856.1"/>
    <property type="match status" value="1"/>
</dbReference>
<dbReference type="PANTHER" id="PTHR34475">
    <property type="match status" value="1"/>
</dbReference>
<dbReference type="PANTHER" id="PTHR34475:SF1">
    <property type="entry name" value="CYTOSKELETON PROTEIN RODZ"/>
    <property type="match status" value="1"/>
</dbReference>
<dbReference type="Pfam" id="PF13413">
    <property type="entry name" value="HTH_25"/>
    <property type="match status" value="1"/>
</dbReference>
<dbReference type="Pfam" id="PF13464">
    <property type="entry name" value="RodZ_C"/>
    <property type="match status" value="1"/>
</dbReference>
<dbReference type="SMART" id="SM00530">
    <property type="entry name" value="HTH_XRE"/>
    <property type="match status" value="1"/>
</dbReference>
<dbReference type="SUPFAM" id="SSF47413">
    <property type="entry name" value="lambda repressor-like DNA-binding domains"/>
    <property type="match status" value="1"/>
</dbReference>
<dbReference type="PROSITE" id="PS50943">
    <property type="entry name" value="HTH_CROC1"/>
    <property type="match status" value="1"/>
</dbReference>
<sequence>MNTEATQDHQEANTTGARLRHAREQLGLSQQAVAERLCLKVSTVRDIEDDKAPADLASTFLRGYIRSYARLVHIPEDELLPMMAKQAPIRAAKVAPMQSFSLGKRRKKRDGWLMSFTWLVLFVVIGLSGAWWWQDHKAQQEEISTMADQSSAELNGGDANSQNVPLDTSAPAAPTADSAANSAPTDTASAPTTSAPAQTPADNNAVVAPSQANVDTAGTTPAAPATTPASPLPTDQANVTTPAASAQDLVMNFSADCWLEVSDATGKKLFSGLQRKGGNLNLSGQAPYKLKIGAPAAVQIQYLGKPVDLSRFIRTNQVARLTLNAESSPAQ</sequence>
<gene>
    <name evidence="1" type="primary">rodZ</name>
    <name type="ordered locus">KPN78578_27950</name>
    <name type="ORF">KPN_02846</name>
</gene>
<name>RODZ_KLEP7</name>